<feature type="chain" id="PRO_0000192456" description="Large-conductance mechanosensitive channel">
    <location>
        <begin position="1"/>
        <end position="139"/>
    </location>
</feature>
<feature type="transmembrane region" description="Helical" evidence="1">
    <location>
        <begin position="9"/>
        <end position="29"/>
    </location>
</feature>
<feature type="transmembrane region" description="Helical" evidence="1">
    <location>
        <begin position="79"/>
        <end position="99"/>
    </location>
</feature>
<gene>
    <name evidence="1" type="primary">mscL</name>
    <name type="ordered locus">PP_4645</name>
</gene>
<reference key="1">
    <citation type="journal article" date="2002" name="Environ. Microbiol.">
        <title>Complete genome sequence and comparative analysis of the metabolically versatile Pseudomonas putida KT2440.</title>
        <authorList>
            <person name="Nelson K.E."/>
            <person name="Weinel C."/>
            <person name="Paulsen I.T."/>
            <person name="Dodson R.J."/>
            <person name="Hilbert H."/>
            <person name="Martins dos Santos V.A.P."/>
            <person name="Fouts D.E."/>
            <person name="Gill S.R."/>
            <person name="Pop M."/>
            <person name="Holmes M."/>
            <person name="Brinkac L.M."/>
            <person name="Beanan M.J."/>
            <person name="DeBoy R.T."/>
            <person name="Daugherty S.C."/>
            <person name="Kolonay J.F."/>
            <person name="Madupu R."/>
            <person name="Nelson W.C."/>
            <person name="White O."/>
            <person name="Peterson J.D."/>
            <person name="Khouri H.M."/>
            <person name="Hance I."/>
            <person name="Chris Lee P."/>
            <person name="Holtzapple E.K."/>
            <person name="Scanlan D."/>
            <person name="Tran K."/>
            <person name="Moazzez A."/>
            <person name="Utterback T.R."/>
            <person name="Rizzo M."/>
            <person name="Lee K."/>
            <person name="Kosack D."/>
            <person name="Moestl D."/>
            <person name="Wedler H."/>
            <person name="Lauber J."/>
            <person name="Stjepandic D."/>
            <person name="Hoheisel J."/>
            <person name="Straetz M."/>
            <person name="Heim S."/>
            <person name="Kiewitz C."/>
            <person name="Eisen J.A."/>
            <person name="Timmis K.N."/>
            <person name="Duesterhoeft A."/>
            <person name="Tuemmler B."/>
            <person name="Fraser C.M."/>
        </authorList>
    </citation>
    <scope>NUCLEOTIDE SEQUENCE [LARGE SCALE GENOMIC DNA]</scope>
    <source>
        <strain>ATCC 47054 / DSM 6125 / CFBP 8728 / NCIMB 11950 / KT2440</strain>
    </source>
</reference>
<comment type="function">
    <text evidence="1">Channel that opens in response to stretch forces in the membrane lipid bilayer. May participate in the regulation of osmotic pressure changes within the cell.</text>
</comment>
<comment type="subunit">
    <text evidence="1">Homopentamer.</text>
</comment>
<comment type="subcellular location">
    <subcellularLocation>
        <location evidence="1">Cell inner membrane</location>
        <topology evidence="1">Multi-pass membrane protein</topology>
    </subcellularLocation>
</comment>
<comment type="similarity">
    <text evidence="1">Belongs to the MscL family.</text>
</comment>
<protein>
    <recommendedName>
        <fullName evidence="1">Large-conductance mechanosensitive channel</fullName>
    </recommendedName>
</protein>
<sequence>MGMLNEFKAFAVKGNVVDMAVGIIIGAAFGKIVSSFVGDVIMPPLGLLIGGVDFSDLAITLKAAEGDVPAVVLAYGKFIQTVIDFVIVAFAIFMGVKAINKLKREEAVAPTTPPVPSAEETLLTEIRDLLKTQNQNRLP</sequence>
<evidence type="ECO:0000255" key="1">
    <source>
        <dbReference type="HAMAP-Rule" id="MF_00115"/>
    </source>
</evidence>
<organism>
    <name type="scientific">Pseudomonas putida (strain ATCC 47054 / DSM 6125 / CFBP 8728 / NCIMB 11950 / KT2440)</name>
    <dbReference type="NCBI Taxonomy" id="160488"/>
    <lineage>
        <taxon>Bacteria</taxon>
        <taxon>Pseudomonadati</taxon>
        <taxon>Pseudomonadota</taxon>
        <taxon>Gammaproteobacteria</taxon>
        <taxon>Pseudomonadales</taxon>
        <taxon>Pseudomonadaceae</taxon>
        <taxon>Pseudomonas</taxon>
    </lineage>
</organism>
<keyword id="KW-0997">Cell inner membrane</keyword>
<keyword id="KW-1003">Cell membrane</keyword>
<keyword id="KW-0407">Ion channel</keyword>
<keyword id="KW-0406">Ion transport</keyword>
<keyword id="KW-0472">Membrane</keyword>
<keyword id="KW-1185">Reference proteome</keyword>
<keyword id="KW-0812">Transmembrane</keyword>
<keyword id="KW-1133">Transmembrane helix</keyword>
<keyword id="KW-0813">Transport</keyword>
<dbReference type="EMBL" id="AE015451">
    <property type="protein sequence ID" value="AAN70218.1"/>
    <property type="molecule type" value="Genomic_DNA"/>
</dbReference>
<dbReference type="RefSeq" id="NP_746754.1">
    <property type="nucleotide sequence ID" value="NC_002947.4"/>
</dbReference>
<dbReference type="RefSeq" id="WP_010955303.1">
    <property type="nucleotide sequence ID" value="NZ_CP169744.1"/>
</dbReference>
<dbReference type="SMR" id="Q88E23"/>
<dbReference type="STRING" id="160488.PP_4645"/>
<dbReference type="PaxDb" id="160488-PP_4645"/>
<dbReference type="GeneID" id="83682352"/>
<dbReference type="KEGG" id="ppu:PP_4645"/>
<dbReference type="PATRIC" id="fig|160488.4.peg.4953"/>
<dbReference type="eggNOG" id="COG1970">
    <property type="taxonomic scope" value="Bacteria"/>
</dbReference>
<dbReference type="HOGENOM" id="CLU_095787_0_0_6"/>
<dbReference type="OrthoDB" id="9810350at2"/>
<dbReference type="PhylomeDB" id="Q88E23"/>
<dbReference type="BioCyc" id="PPUT160488:G1G01-4958-MONOMER"/>
<dbReference type="Proteomes" id="UP000000556">
    <property type="component" value="Chromosome"/>
</dbReference>
<dbReference type="GO" id="GO:0005886">
    <property type="term" value="C:plasma membrane"/>
    <property type="evidence" value="ECO:0007669"/>
    <property type="project" value="UniProtKB-SubCell"/>
</dbReference>
<dbReference type="GO" id="GO:0008381">
    <property type="term" value="F:mechanosensitive monoatomic ion channel activity"/>
    <property type="evidence" value="ECO:0007669"/>
    <property type="project" value="UniProtKB-UniRule"/>
</dbReference>
<dbReference type="FunFam" id="1.10.1200.120:FF:000001">
    <property type="entry name" value="Large-conductance mechanosensitive channel"/>
    <property type="match status" value="1"/>
</dbReference>
<dbReference type="Gene3D" id="1.10.1200.120">
    <property type="entry name" value="Large-conductance mechanosensitive channel, MscL, domain 1"/>
    <property type="match status" value="1"/>
</dbReference>
<dbReference type="HAMAP" id="MF_00115">
    <property type="entry name" value="MscL"/>
    <property type="match status" value="1"/>
</dbReference>
<dbReference type="InterPro" id="IPR019823">
    <property type="entry name" value="Mechanosensitive_channel_CS"/>
</dbReference>
<dbReference type="InterPro" id="IPR001185">
    <property type="entry name" value="MS_channel"/>
</dbReference>
<dbReference type="InterPro" id="IPR037673">
    <property type="entry name" value="MSC/AndL"/>
</dbReference>
<dbReference type="InterPro" id="IPR036019">
    <property type="entry name" value="MscL_channel"/>
</dbReference>
<dbReference type="NCBIfam" id="TIGR00220">
    <property type="entry name" value="mscL"/>
    <property type="match status" value="1"/>
</dbReference>
<dbReference type="NCBIfam" id="NF001843">
    <property type="entry name" value="PRK00567.1-4"/>
    <property type="match status" value="1"/>
</dbReference>
<dbReference type="PANTHER" id="PTHR30266:SF2">
    <property type="entry name" value="LARGE-CONDUCTANCE MECHANOSENSITIVE CHANNEL"/>
    <property type="match status" value="1"/>
</dbReference>
<dbReference type="PANTHER" id="PTHR30266">
    <property type="entry name" value="MECHANOSENSITIVE CHANNEL MSCL"/>
    <property type="match status" value="1"/>
</dbReference>
<dbReference type="Pfam" id="PF01741">
    <property type="entry name" value="MscL"/>
    <property type="match status" value="1"/>
</dbReference>
<dbReference type="PRINTS" id="PR01264">
    <property type="entry name" value="MECHCHANNEL"/>
</dbReference>
<dbReference type="SUPFAM" id="SSF81330">
    <property type="entry name" value="Gated mechanosensitive channel"/>
    <property type="match status" value="1"/>
</dbReference>
<dbReference type="PROSITE" id="PS01327">
    <property type="entry name" value="MSCL"/>
    <property type="match status" value="1"/>
</dbReference>
<name>MSCL_PSEPK</name>
<proteinExistence type="inferred from homology"/>
<accession>Q88E23</accession>